<evidence type="ECO:0000255" key="1">
    <source>
        <dbReference type="PROSITE-ProRule" id="PRU00257"/>
    </source>
</evidence>
<evidence type="ECO:0000269" key="2">
    <source>
    </source>
</evidence>
<evidence type="ECO:0000269" key="3">
    <source>
    </source>
</evidence>
<evidence type="ECO:0000269" key="4">
    <source>
    </source>
</evidence>
<evidence type="ECO:0000269" key="5">
    <source>
    </source>
</evidence>
<evidence type="ECO:0000305" key="6"/>
<dbReference type="EMBL" id="AE000516">
    <property type="protein sequence ID" value="AAK47136.1"/>
    <property type="molecule type" value="Genomic_DNA"/>
</dbReference>
<dbReference type="PIR" id="H70878">
    <property type="entry name" value="H70878"/>
</dbReference>
<dbReference type="RefSeq" id="WP_003414032.1">
    <property type="nucleotide sequence ID" value="NZ_KK341227.1"/>
</dbReference>
<dbReference type="SMR" id="P9WMH6"/>
<dbReference type="GeneID" id="45426732"/>
<dbReference type="KEGG" id="mtc:MT2816"/>
<dbReference type="PATRIC" id="fig|83331.31.peg.3036"/>
<dbReference type="HOGENOM" id="CLU_066192_8_2_11"/>
<dbReference type="Proteomes" id="UP000001020">
    <property type="component" value="Chromosome"/>
</dbReference>
<dbReference type="GO" id="GO:0003677">
    <property type="term" value="F:DNA binding"/>
    <property type="evidence" value="ECO:0007669"/>
    <property type="project" value="UniProtKB-KW"/>
</dbReference>
<dbReference type="CDD" id="cd00093">
    <property type="entry name" value="HTH_XRE"/>
    <property type="match status" value="1"/>
</dbReference>
<dbReference type="FunFam" id="1.10.260.40:FF:000032">
    <property type="entry name" value="Transcriptional regulator ClgR"/>
    <property type="match status" value="1"/>
</dbReference>
<dbReference type="Gene3D" id="1.10.260.40">
    <property type="entry name" value="lambda repressor-like DNA-binding domains"/>
    <property type="match status" value="1"/>
</dbReference>
<dbReference type="InterPro" id="IPR049655">
    <property type="entry name" value="ClgR-like"/>
</dbReference>
<dbReference type="InterPro" id="IPR001387">
    <property type="entry name" value="Cro/C1-type_HTH"/>
</dbReference>
<dbReference type="InterPro" id="IPR010982">
    <property type="entry name" value="Lambda_DNA-bd_dom_sf"/>
</dbReference>
<dbReference type="NCBIfam" id="NF041677">
    <property type="entry name" value="trans_regClgR"/>
    <property type="match status" value="1"/>
</dbReference>
<dbReference type="Pfam" id="PF01381">
    <property type="entry name" value="HTH_3"/>
    <property type="match status" value="1"/>
</dbReference>
<dbReference type="SMART" id="SM00530">
    <property type="entry name" value="HTH_XRE"/>
    <property type="match status" value="1"/>
</dbReference>
<dbReference type="SUPFAM" id="SSF47413">
    <property type="entry name" value="lambda repressor-like DNA-binding domains"/>
    <property type="match status" value="1"/>
</dbReference>
<dbReference type="PROSITE" id="PS50943">
    <property type="entry name" value="HTH_CROC1"/>
    <property type="match status" value="1"/>
</dbReference>
<proteinExistence type="evidence at transcript level"/>
<gene>
    <name type="primary">clgR</name>
    <name type="ordered locus">MT2816</name>
</gene>
<comment type="function">
    <text evidence="2 3 4 5">Key stress-response regulator that plays an important role in multiple regulatory networks in response to different stress conditions (PubMed:20701538, PubMed:24705585). Required to manage host-derived stress during infection (PubMed:20701538). Plays a role during hypoxia and reaeration (PubMed:25422323). Controls the expression of many genes involved in heat shock, virulence, lipid metabolism, transport or regulation, including clpP1, clpP2, clpC1, hsp, groES, otsA, pknD, prcA and prcB (PubMed:19376862, PubMed:20701538). May function by protecting intracellular redox potential and by inducing the expression of trehalose, a constituent of cell walls that is important for defense against cell-surface and oxidative stress (PubMed:20701538). Also performs different functions during stress response and is important for the pathogenicity of M.tuberculosis in vivo, regardless of the induction of the Clp proteolytic pathway (PubMed:24705585). May directly activate SigE and/or SigH (PubMed:24705585).</text>
</comment>
<comment type="induction">
    <text evidence="2 3 5">Expression requires SigE and SigH (PubMed:19376862, PubMed:20701538). Induced in response to environmental stress, such as redox stress, heat shock, acid shock, SDS stress and thioridazine (THZ) (PubMed:19376862, PubMed:20701538). Induced in host phagocytes (PubMed:20701538). Induced by hypoxia and reaeration (PubMed:25422323).</text>
</comment>
<comment type="disruption phenotype">
    <text evidence="5">Mutant is able to replicate without any defect during hypoxia, but it is significantly impaired in its ability to resume its growth during the subsequent reaeration phase.</text>
</comment>
<feature type="chain" id="PRO_0000427302" description="Transcriptional regulator ClgR">
    <location>
        <begin position="1"/>
        <end position="112"/>
    </location>
</feature>
<feature type="domain" description="HTH cro/C1-type" evidence="1">
    <location>
        <begin position="13"/>
        <end position="67"/>
    </location>
</feature>
<feature type="DNA-binding region" description="H-T-H motif" evidence="1">
    <location>
        <begin position="24"/>
        <end position="43"/>
    </location>
</feature>
<organism>
    <name type="scientific">Mycobacterium tuberculosis (strain CDC 1551 / Oshkosh)</name>
    <dbReference type="NCBI Taxonomy" id="83331"/>
    <lineage>
        <taxon>Bacteria</taxon>
        <taxon>Bacillati</taxon>
        <taxon>Actinomycetota</taxon>
        <taxon>Actinomycetes</taxon>
        <taxon>Mycobacteriales</taxon>
        <taxon>Mycobacteriaceae</taxon>
        <taxon>Mycobacterium</taxon>
        <taxon>Mycobacterium tuberculosis complex</taxon>
    </lineage>
</organism>
<accession>P9WMH6</accession>
<accession>F2GPH7</accession>
<accession>O33287</accession>
<accession>Q7D6N6</accession>
<sequence length="112" mass="11786">MAALVREVVGDVLRGARMSQGRTLREVSDSARVSLGYLSEIERGRKEPSSELLSAICTALQLPLSVVLIDAGERMARQERLARATPAGRATGATIDASTKVVIAPVVSLAVA</sequence>
<protein>
    <recommendedName>
        <fullName evidence="6">Transcriptional regulator ClgR</fullName>
    </recommendedName>
</protein>
<name>CLGR_MYCTO</name>
<reference key="1">
    <citation type="journal article" date="2002" name="J. Bacteriol.">
        <title>Whole-genome comparison of Mycobacterium tuberculosis clinical and laboratory strains.</title>
        <authorList>
            <person name="Fleischmann R.D."/>
            <person name="Alland D."/>
            <person name="Eisen J.A."/>
            <person name="Carpenter L."/>
            <person name="White O."/>
            <person name="Peterson J.D."/>
            <person name="DeBoy R.T."/>
            <person name="Dodson R.J."/>
            <person name="Gwinn M.L."/>
            <person name="Haft D.H."/>
            <person name="Hickey E.K."/>
            <person name="Kolonay J.F."/>
            <person name="Nelson W.C."/>
            <person name="Umayam L.A."/>
            <person name="Ermolaeva M.D."/>
            <person name="Salzberg S.L."/>
            <person name="Delcher A."/>
            <person name="Utterback T.R."/>
            <person name="Weidman J.F."/>
            <person name="Khouri H.M."/>
            <person name="Gill J."/>
            <person name="Mikula A."/>
            <person name="Bishai W."/>
            <person name="Jacobs W.R. Jr."/>
            <person name="Venter J.C."/>
            <person name="Fraser C.M."/>
        </authorList>
    </citation>
    <scope>NUCLEOTIDE SEQUENCE [LARGE SCALE GENOMIC DNA]</scope>
    <source>
        <strain>CDC 1551 / Oshkosh</strain>
    </source>
</reference>
<reference key="2">
    <citation type="journal article" date="2009" name="J. Bacteriol.">
        <title>Functional genomics reveals extended roles of the Mycobacterium tuberculosis stress response factor sigmaH.</title>
        <authorList>
            <person name="Mehra S."/>
            <person name="Kaushal D."/>
        </authorList>
    </citation>
    <scope>FUNCTION</scope>
    <scope>INDUCTION</scope>
    <source>
        <strain>CDC 1551 / Oshkosh</strain>
    </source>
</reference>
<reference key="3">
    <citation type="journal article" date="2010" name="J. Infect. Dis.">
        <title>Mycobacterium tuberculosis MT2816 encodes a key stress-response regulator.</title>
        <authorList>
            <person name="Mehra S."/>
            <person name="Dutta N.K."/>
            <person name="Mollenkopf H.J."/>
            <person name="Kaushal D."/>
        </authorList>
    </citation>
    <scope>FUNCTION</scope>
    <scope>INDUCTION</scope>
    <source>
        <strain>CDC 1551 / Oshkosh</strain>
    </source>
</reference>
<reference key="4">
    <citation type="journal article" date="2014" name="PLoS ONE">
        <title>The Mycobacterium tuberculosis Rv2745c plays an important role in responding to redox stress.</title>
        <authorList>
            <person name="McGillivray A."/>
            <person name="Golden N.A."/>
            <person name="Gautam U.S."/>
            <person name="Mehra S."/>
            <person name="Kaushal D."/>
        </authorList>
    </citation>
    <scope>FUNCTION</scope>
</reference>
<reference key="5">
    <citation type="journal article" date="2015" name="J. Biol. Chem.">
        <title>The Mycobacterium tuberculosis Clp gene regulator is required for in vitro reactivation from hypoxia-induced dormancy.</title>
        <authorList>
            <person name="McGillivray A."/>
            <person name="Golden N.A."/>
            <person name="Kaushal D."/>
        </authorList>
    </citation>
    <scope>FUNCTION</scope>
    <scope>INDUCTION</scope>
    <scope>DISRUPTION PHENOTYPE</scope>
    <source>
        <strain>CDC 1551 / Oshkosh</strain>
    </source>
</reference>
<keyword id="KW-0238">DNA-binding</keyword>
<keyword id="KW-1185">Reference proteome</keyword>
<keyword id="KW-0346">Stress response</keyword>
<keyword id="KW-0804">Transcription</keyword>
<keyword id="KW-0805">Transcription regulation</keyword>